<evidence type="ECO:0000250" key="1">
    <source>
        <dbReference type="UniProtKB" id="Q8NKX2"/>
    </source>
</evidence>
<evidence type="ECO:0000305" key="2"/>
<reference key="1">
    <citation type="journal article" date="2001" name="Proc. Natl. Acad. Sci. U.S.A.">
        <title>Complete genome sequence of an M1 strain of Streptococcus pyogenes.</title>
        <authorList>
            <person name="Ferretti J.J."/>
            <person name="McShan W.M."/>
            <person name="Ajdic D.J."/>
            <person name="Savic D.J."/>
            <person name="Savic G."/>
            <person name="Lyon K."/>
            <person name="Primeaux C."/>
            <person name="Sezate S."/>
            <person name="Suvorov A.N."/>
            <person name="Kenton S."/>
            <person name="Lai H.S."/>
            <person name="Lin S.P."/>
            <person name="Qian Y."/>
            <person name="Jia H.G."/>
            <person name="Najar F.Z."/>
            <person name="Ren Q."/>
            <person name="Zhu H."/>
            <person name="Song L."/>
            <person name="White J."/>
            <person name="Yuan X."/>
            <person name="Clifton S.W."/>
            <person name="Roe B.A."/>
            <person name="McLaughlin R.E."/>
        </authorList>
    </citation>
    <scope>NUCLEOTIDE SEQUENCE [LARGE SCALE GENOMIC DNA]</scope>
    <source>
        <strain>ATCC 700294 / SF370 / Serotype M1</strain>
    </source>
</reference>
<dbReference type="EMBL" id="AE004092">
    <property type="protein sequence ID" value="AAK33664.1"/>
    <property type="molecule type" value="Genomic_DNA"/>
</dbReference>
<dbReference type="RefSeq" id="NP_268943.1">
    <property type="nucleotide sequence ID" value="NC_002737.2"/>
</dbReference>
<dbReference type="SMR" id="P0C0I5"/>
<dbReference type="PaxDb" id="1314-HKU360_01603"/>
<dbReference type="KEGG" id="spy:SPy_0711"/>
<dbReference type="PATRIC" id="fig|160490.10.peg.605"/>
<dbReference type="HOGENOM" id="CLU_093855_1_0_9"/>
<dbReference type="Proteomes" id="UP000000750">
    <property type="component" value="Chromosome"/>
</dbReference>
<dbReference type="GO" id="GO:0005576">
    <property type="term" value="C:extracellular region"/>
    <property type="evidence" value="ECO:0007669"/>
    <property type="project" value="InterPro"/>
</dbReference>
<dbReference type="GO" id="GO:0046872">
    <property type="term" value="F:metal ion binding"/>
    <property type="evidence" value="ECO:0007669"/>
    <property type="project" value="UniProtKB-KW"/>
</dbReference>
<dbReference type="GO" id="GO:0090729">
    <property type="term" value="F:toxin activity"/>
    <property type="evidence" value="ECO:0007669"/>
    <property type="project" value="UniProtKB-KW"/>
</dbReference>
<dbReference type="Gene3D" id="2.40.50.110">
    <property type="match status" value="1"/>
</dbReference>
<dbReference type="Gene3D" id="3.10.20.120">
    <property type="match status" value="1"/>
</dbReference>
<dbReference type="InterPro" id="IPR008992">
    <property type="entry name" value="Enterotoxin"/>
</dbReference>
<dbReference type="InterPro" id="IPR006126">
    <property type="entry name" value="Staph/Strept_toxin_CS"/>
</dbReference>
<dbReference type="InterPro" id="IPR006173">
    <property type="entry name" value="Staph_tox_OB"/>
</dbReference>
<dbReference type="InterPro" id="IPR016091">
    <property type="entry name" value="SuperAg_toxin_C"/>
</dbReference>
<dbReference type="InterPro" id="IPR013307">
    <property type="entry name" value="Superantigen_bac"/>
</dbReference>
<dbReference type="InterPro" id="IPR006123">
    <property type="entry name" value="Toxin_b-grasp_Staph/Strep"/>
</dbReference>
<dbReference type="InterPro" id="IPR006177">
    <property type="entry name" value="Toxin_bac"/>
</dbReference>
<dbReference type="Pfam" id="PF02876">
    <property type="entry name" value="Stap_Strp_tox_C"/>
    <property type="match status" value="1"/>
</dbReference>
<dbReference type="Pfam" id="PF01123">
    <property type="entry name" value="Stap_Strp_toxin"/>
    <property type="match status" value="1"/>
</dbReference>
<dbReference type="PRINTS" id="PR00279">
    <property type="entry name" value="BACTRLTOXIN"/>
</dbReference>
<dbReference type="PRINTS" id="PR01898">
    <property type="entry name" value="SAGSUPRFAMLY"/>
</dbReference>
<dbReference type="SUPFAM" id="SSF50203">
    <property type="entry name" value="Bacterial enterotoxins"/>
    <property type="match status" value="1"/>
</dbReference>
<dbReference type="SUPFAM" id="SSF54334">
    <property type="entry name" value="Superantigen toxins, C-terminal domain"/>
    <property type="match status" value="1"/>
</dbReference>
<dbReference type="PROSITE" id="PS00277">
    <property type="entry name" value="STAPH_STREP_TOXIN_1"/>
    <property type="match status" value="1"/>
</dbReference>
<dbReference type="PROSITE" id="PS00278">
    <property type="entry name" value="STAPH_STREP_TOXIN_2"/>
    <property type="match status" value="1"/>
</dbReference>
<gene>
    <name type="primary">speC</name>
    <name type="ordered locus">SPy_0711</name>
</gene>
<comment type="function">
    <text evidence="1">Superantigen that acts as a causative agent of the symptoms associated with scarlet fever. Has been associated with streptococcal toxic shock-like disease and may play a role in the early events of rheumatic fever. Superantigens cross-link major histocompatibility complex (MHC) class II and T-cell receptor (TCR) molecules, resulting in an overstimulation of T-cells associated with a massive release of pyrogenic and inflammatory cytokines.</text>
</comment>
<comment type="similarity">
    <text evidence="2">Belongs to the staphylococcal/streptococcal toxin family.</text>
</comment>
<name>SPEC_STRP1</name>
<protein>
    <recommendedName>
        <fullName>Exotoxin type C</fullName>
    </recommendedName>
    <alternativeName>
        <fullName>SPE C</fullName>
    </alternativeName>
</protein>
<keyword id="KW-0479">Metal-binding</keyword>
<keyword id="KW-1185">Reference proteome</keyword>
<keyword id="KW-0732">Signal</keyword>
<keyword id="KW-0800">Toxin</keyword>
<keyword id="KW-0843">Virulence</keyword>
<keyword id="KW-0862">Zinc</keyword>
<accession>P0C0I5</accession>
<accession>P13380</accession>
<proteinExistence type="inferred from homology"/>
<organism>
    <name type="scientific">Streptococcus pyogenes serotype M1</name>
    <dbReference type="NCBI Taxonomy" id="301447"/>
    <lineage>
        <taxon>Bacteria</taxon>
        <taxon>Bacillati</taxon>
        <taxon>Bacillota</taxon>
        <taxon>Bacilli</taxon>
        <taxon>Lactobacillales</taxon>
        <taxon>Streptococcaceae</taxon>
        <taxon>Streptococcus</taxon>
    </lineage>
</organism>
<feature type="signal peptide" evidence="1">
    <location>
        <begin position="1"/>
        <end position="27"/>
    </location>
</feature>
<feature type="chain" id="PRO_0000041942" description="Exotoxin type C">
    <location>
        <begin position="28"/>
        <end position="235"/>
    </location>
</feature>
<feature type="binding site" evidence="1">
    <location>
        <position position="194"/>
    </location>
    <ligand>
        <name>Zn(2+)</name>
        <dbReference type="ChEBI" id="CHEBI:29105"/>
    </ligand>
</feature>
<feature type="binding site" evidence="1">
    <location>
        <position position="228"/>
    </location>
    <ligand>
        <name>Zn(2+)</name>
        <dbReference type="ChEBI" id="CHEBI:29105"/>
    </ligand>
</feature>
<feature type="binding site" evidence="1">
    <location>
        <position position="230"/>
    </location>
    <ligand>
        <name>Zn(2+)</name>
        <dbReference type="ChEBI" id="CHEBI:29105"/>
    </ligand>
</feature>
<sequence>MKKINIIKIVFIITVILISTISPIIKSDSKKDISNVKSDLLYAYTITPYDYKNCRVNFSTTHTLNIDTQKYRGKDYYISSEMSYEASQKFKRDDHVDVFGLFYILNSHTGEYIYGGITPAQNNKVNHKLLGNLFISGESQQNLNNKIILEKDIVTFQEIDFKIRKYLMDNYKIYDATSPYVSGRIEIGTKDGKHEQIDLFDSPNEGTRSDIFAKYKDNRIINMKNFSHFDIYLEK</sequence>